<proteinExistence type="evidence at transcript level"/>
<name>GTPB1_XENLA</name>
<accession>Q5XGS8</accession>
<keyword id="KW-0963">Cytoplasm</keyword>
<keyword id="KW-0342">GTP-binding</keyword>
<keyword id="KW-0547">Nucleotide-binding</keyword>
<keyword id="KW-1185">Reference proteome</keyword>
<gene>
    <name type="primary">gtpbp1</name>
</gene>
<comment type="function">
    <text evidence="2">Promotes degradation of target mRNA species. Plays a role in the regulation of circadian mRNA stability. Binds GTP and has GTPase activity (By similarity).</text>
</comment>
<comment type="subcellular location">
    <subcellularLocation>
        <location evidence="1">Cytoplasm</location>
    </subcellularLocation>
</comment>
<comment type="similarity">
    <text evidence="4">Belongs to the TRAFAC class translation factor GTPase superfamily. Classic translation factor GTPase family. GTPBP1 subfamily.</text>
</comment>
<protein>
    <recommendedName>
        <fullName>GTP-binding protein 1</fullName>
    </recommendedName>
</protein>
<sequence>MASLASSQTEPNTSESPVPASMFSPEPDGEDSDCSLDGEPLRNGEADIDVTSKFVLVSPSAEQYDSLLHQLRDRMDEGRGETIYVIGQGSDGTEYGLNEADMEASVATVTSMAEQIVADMILLREHQEAGGKVQDYLVRKSVGDNDFLEVRVAVVGNVDAGKSTLLGVLTHGELDNGRGFARQKLFRHKHEIESGRTSSVGNDILGFDNHGQVVNKPDNHGGSLEWTKICEKSSKIITFIDLAGHEKYLKTTVFGMTGHLPDFCMLMVGSNAGIVGMTKEHLGLALALNVPVFVVVTKIDMCPANILQETLKLLQRLLKSPGCRKIPVLVQNKDDVIVTASNFSSERMCPIFQISNVTGENLDLLKMFLNLLSPRSSSREEEPAEFQIDDTYSVPGVGTVVSGTTLRGLIKLNDLLLLGPDPLGNFTSIAVKSIHRKRMPVKEVRGGQTASFALKKIKRSTIRKGMVMVSPRLNPQASWEFEAEILVLHHPTTISPRYQAMVHCGSIRQTATILTMSRDCLRTGDKAIVHFRFIKTPEYLHIDQRLVFREGRTKAVGTITKLLQSTNNLPMNSKPPQQVKMQSTKKSLHGKKDEQSPAAAVTEEASPSAAAIGVTAGAGAMQAQPKTGGGGRRRGGQRHKVKAQGACTASTGGC</sequence>
<dbReference type="EMBL" id="BC084354">
    <property type="protein sequence ID" value="AAH84354.1"/>
    <property type="molecule type" value="mRNA"/>
</dbReference>
<dbReference type="RefSeq" id="NP_001088313.1">
    <property type="nucleotide sequence ID" value="NM_001094844.1"/>
</dbReference>
<dbReference type="SMR" id="Q5XGS8"/>
<dbReference type="DNASU" id="495150"/>
<dbReference type="GeneID" id="495150"/>
<dbReference type="KEGG" id="xla:495150"/>
<dbReference type="AGR" id="Xenbase:XB-GENE-951188"/>
<dbReference type="CTD" id="495150"/>
<dbReference type="Xenbase" id="XB-GENE-951188">
    <property type="gene designation" value="gtpbp1.S"/>
</dbReference>
<dbReference type="OrthoDB" id="248233at2759"/>
<dbReference type="Proteomes" id="UP000186698">
    <property type="component" value="Chromosome 4S"/>
</dbReference>
<dbReference type="Bgee" id="495150">
    <property type="expression patterns" value="Expressed in egg cell and 19 other cell types or tissues"/>
</dbReference>
<dbReference type="GO" id="GO:0000177">
    <property type="term" value="C:cytoplasmic exosome (RNase complex)"/>
    <property type="evidence" value="ECO:0000250"/>
    <property type="project" value="UniProtKB"/>
</dbReference>
<dbReference type="GO" id="GO:0005829">
    <property type="term" value="C:cytosol"/>
    <property type="evidence" value="ECO:0000250"/>
    <property type="project" value="UniProtKB"/>
</dbReference>
<dbReference type="GO" id="GO:0005525">
    <property type="term" value="F:GTP binding"/>
    <property type="evidence" value="ECO:0007669"/>
    <property type="project" value="UniProtKB-KW"/>
</dbReference>
<dbReference type="GO" id="GO:0003924">
    <property type="term" value="F:GTPase activity"/>
    <property type="evidence" value="ECO:0000250"/>
    <property type="project" value="UniProtKB"/>
</dbReference>
<dbReference type="GO" id="GO:0003746">
    <property type="term" value="F:translation elongation factor activity"/>
    <property type="evidence" value="ECO:0000318"/>
    <property type="project" value="GO_Central"/>
</dbReference>
<dbReference type="GO" id="GO:0046039">
    <property type="term" value="P:GTP metabolic process"/>
    <property type="evidence" value="ECO:0000250"/>
    <property type="project" value="UniProtKB"/>
</dbReference>
<dbReference type="GO" id="GO:0061014">
    <property type="term" value="P:positive regulation of mRNA catabolic process"/>
    <property type="evidence" value="ECO:0000250"/>
    <property type="project" value="UniProtKB"/>
</dbReference>
<dbReference type="GO" id="GO:0006414">
    <property type="term" value="P:translational elongation"/>
    <property type="evidence" value="ECO:0000318"/>
    <property type="project" value="GO_Central"/>
</dbReference>
<dbReference type="CDD" id="cd04165">
    <property type="entry name" value="GTPBP1_like"/>
    <property type="match status" value="1"/>
</dbReference>
<dbReference type="CDD" id="cd03694">
    <property type="entry name" value="GTPBP_II"/>
    <property type="match status" value="1"/>
</dbReference>
<dbReference type="CDD" id="cd03708">
    <property type="entry name" value="GTPBP_III"/>
    <property type="match status" value="1"/>
</dbReference>
<dbReference type="FunFam" id="2.40.30.10:FF:000028">
    <property type="entry name" value="GTP-binding protein 1,-like"/>
    <property type="match status" value="1"/>
</dbReference>
<dbReference type="FunFam" id="2.40.30.10:FF:000014">
    <property type="entry name" value="Probable GTP-binding protein 1"/>
    <property type="match status" value="1"/>
</dbReference>
<dbReference type="FunFam" id="3.40.50.300:FF:000091">
    <property type="entry name" value="Probable GTP-binding protein 1"/>
    <property type="match status" value="1"/>
</dbReference>
<dbReference type="Gene3D" id="3.40.50.300">
    <property type="entry name" value="P-loop containing nucleotide triphosphate hydrolases"/>
    <property type="match status" value="1"/>
</dbReference>
<dbReference type="Gene3D" id="2.40.30.10">
    <property type="entry name" value="Translation factors"/>
    <property type="match status" value="2"/>
</dbReference>
<dbReference type="InterPro" id="IPR050055">
    <property type="entry name" value="EF-Tu_GTPase"/>
</dbReference>
<dbReference type="InterPro" id="IPR004161">
    <property type="entry name" value="EFTu-like_2"/>
</dbReference>
<dbReference type="InterPro" id="IPR035531">
    <property type="entry name" value="GTPBP1-like"/>
</dbReference>
<dbReference type="InterPro" id="IPR027417">
    <property type="entry name" value="P-loop_NTPase"/>
</dbReference>
<dbReference type="InterPro" id="IPR000795">
    <property type="entry name" value="T_Tr_GTP-bd_dom"/>
</dbReference>
<dbReference type="InterPro" id="IPR009000">
    <property type="entry name" value="Transl_B-barrel_sf"/>
</dbReference>
<dbReference type="InterPro" id="IPR009001">
    <property type="entry name" value="Transl_elong_EF1A/Init_IF2_C"/>
</dbReference>
<dbReference type="PANTHER" id="PTHR43721">
    <property type="entry name" value="ELONGATION FACTOR TU-RELATED"/>
    <property type="match status" value="1"/>
</dbReference>
<dbReference type="PANTHER" id="PTHR43721:SF9">
    <property type="entry name" value="GTP-BINDING PROTEIN 1"/>
    <property type="match status" value="1"/>
</dbReference>
<dbReference type="Pfam" id="PF00009">
    <property type="entry name" value="GTP_EFTU"/>
    <property type="match status" value="1"/>
</dbReference>
<dbReference type="Pfam" id="PF03144">
    <property type="entry name" value="GTP_EFTU_D2"/>
    <property type="match status" value="1"/>
</dbReference>
<dbReference type="SUPFAM" id="SSF50465">
    <property type="entry name" value="EF-Tu/eEF-1alpha/eIF2-gamma C-terminal domain"/>
    <property type="match status" value="1"/>
</dbReference>
<dbReference type="SUPFAM" id="SSF52540">
    <property type="entry name" value="P-loop containing nucleoside triphosphate hydrolases"/>
    <property type="match status" value="1"/>
</dbReference>
<dbReference type="SUPFAM" id="SSF50447">
    <property type="entry name" value="Translation proteins"/>
    <property type="match status" value="1"/>
</dbReference>
<dbReference type="PROSITE" id="PS51722">
    <property type="entry name" value="G_TR_2"/>
    <property type="match status" value="1"/>
</dbReference>
<organism>
    <name type="scientific">Xenopus laevis</name>
    <name type="common">African clawed frog</name>
    <dbReference type="NCBI Taxonomy" id="8355"/>
    <lineage>
        <taxon>Eukaryota</taxon>
        <taxon>Metazoa</taxon>
        <taxon>Chordata</taxon>
        <taxon>Craniata</taxon>
        <taxon>Vertebrata</taxon>
        <taxon>Euteleostomi</taxon>
        <taxon>Amphibia</taxon>
        <taxon>Batrachia</taxon>
        <taxon>Anura</taxon>
        <taxon>Pipoidea</taxon>
        <taxon>Pipidae</taxon>
        <taxon>Xenopodinae</taxon>
        <taxon>Xenopus</taxon>
        <taxon>Xenopus</taxon>
    </lineage>
</organism>
<reference key="1">
    <citation type="submission" date="2004-10" db="EMBL/GenBank/DDBJ databases">
        <authorList>
            <consortium name="NIH - Xenopus Gene Collection (XGC) project"/>
        </authorList>
    </citation>
    <scope>NUCLEOTIDE SEQUENCE [LARGE SCALE MRNA]</scope>
    <source>
        <tissue>Oocyte</tissue>
    </source>
</reference>
<feature type="chain" id="PRO_0000293473" description="GTP-binding protein 1">
    <location>
        <begin position="1"/>
        <end position="654"/>
    </location>
</feature>
<feature type="domain" description="tr-type G" evidence="4">
    <location>
        <begin position="147"/>
        <end position="377"/>
    </location>
</feature>
<feature type="region of interest" description="Disordered" evidence="5">
    <location>
        <begin position="1"/>
        <end position="44"/>
    </location>
</feature>
<feature type="region of interest" description="G1" evidence="4">
    <location>
        <begin position="156"/>
        <end position="163"/>
    </location>
</feature>
<feature type="region of interest" description="G2" evidence="4">
    <location>
        <begin position="195"/>
        <end position="199"/>
    </location>
</feature>
<feature type="region of interest" description="G3" evidence="4">
    <location>
        <begin position="241"/>
        <end position="244"/>
    </location>
</feature>
<feature type="region of interest" description="G4" evidence="4">
    <location>
        <begin position="297"/>
        <end position="300"/>
    </location>
</feature>
<feature type="region of interest" description="G5" evidence="4">
    <location>
        <begin position="355"/>
        <end position="357"/>
    </location>
</feature>
<feature type="region of interest" description="Disordered" evidence="5">
    <location>
        <begin position="566"/>
        <end position="654"/>
    </location>
</feature>
<feature type="compositionally biased region" description="Polar residues" evidence="5">
    <location>
        <begin position="1"/>
        <end position="16"/>
    </location>
</feature>
<feature type="compositionally biased region" description="Acidic residues" evidence="5">
    <location>
        <begin position="27"/>
        <end position="36"/>
    </location>
</feature>
<feature type="compositionally biased region" description="Polar residues" evidence="5">
    <location>
        <begin position="566"/>
        <end position="585"/>
    </location>
</feature>
<feature type="compositionally biased region" description="Low complexity" evidence="5">
    <location>
        <begin position="609"/>
        <end position="620"/>
    </location>
</feature>
<feature type="compositionally biased region" description="Basic residues" evidence="5">
    <location>
        <begin position="631"/>
        <end position="642"/>
    </location>
</feature>
<feature type="binding site" evidence="3">
    <location>
        <begin position="156"/>
        <end position="163"/>
    </location>
    <ligand>
        <name>GTP</name>
        <dbReference type="ChEBI" id="CHEBI:37565"/>
    </ligand>
</feature>
<feature type="binding site" evidence="3">
    <location>
        <begin position="241"/>
        <end position="245"/>
    </location>
    <ligand>
        <name>GTP</name>
        <dbReference type="ChEBI" id="CHEBI:37565"/>
    </ligand>
</feature>
<feature type="binding site" evidence="3">
    <location>
        <begin position="297"/>
        <end position="300"/>
    </location>
    <ligand>
        <name>GTP</name>
        <dbReference type="ChEBI" id="CHEBI:37565"/>
    </ligand>
</feature>
<evidence type="ECO:0000250" key="1"/>
<evidence type="ECO:0000250" key="2">
    <source>
        <dbReference type="UniProtKB" id="D2XV59"/>
    </source>
</evidence>
<evidence type="ECO:0000255" key="3"/>
<evidence type="ECO:0000255" key="4">
    <source>
        <dbReference type="PROSITE-ProRule" id="PRU01059"/>
    </source>
</evidence>
<evidence type="ECO:0000256" key="5">
    <source>
        <dbReference type="SAM" id="MobiDB-lite"/>
    </source>
</evidence>